<protein>
    <recommendedName>
        <fullName>Kinesin light chain 1</fullName>
        <shortName>KLC 1</shortName>
    </recommendedName>
</protein>
<evidence type="ECO:0000250" key="1">
    <source>
        <dbReference type="UniProtKB" id="P37285"/>
    </source>
</evidence>
<evidence type="ECO:0000250" key="2">
    <source>
        <dbReference type="UniProtKB" id="Q07866"/>
    </source>
</evidence>
<evidence type="ECO:0000256" key="3">
    <source>
        <dbReference type="SAM" id="MobiDB-lite"/>
    </source>
</evidence>
<evidence type="ECO:0000269" key="4">
    <source>
    </source>
</evidence>
<evidence type="ECO:0000269" key="5">
    <source>
    </source>
</evidence>
<evidence type="ECO:0000305" key="6"/>
<evidence type="ECO:0007744" key="7">
    <source>
    </source>
</evidence>
<evidence type="ECO:0007744" key="8">
    <source>
    </source>
</evidence>
<evidence type="ECO:0007829" key="9">
    <source>
        <dbReference type="PDB" id="6FV0"/>
    </source>
</evidence>
<dbReference type="EMBL" id="AF055665">
    <property type="protein sequence ID" value="AAC27740.1"/>
    <property type="molecule type" value="mRNA"/>
</dbReference>
<dbReference type="PDB" id="6FUZ">
    <property type="method" value="X-ray"/>
    <property type="resolution" value="2.70 A"/>
    <property type="chains" value="A=199-495"/>
</dbReference>
<dbReference type="PDB" id="6FV0">
    <property type="method" value="X-ray"/>
    <property type="resolution" value="2.29 A"/>
    <property type="chains" value="A=204-495"/>
</dbReference>
<dbReference type="PDBsum" id="6FUZ"/>
<dbReference type="PDBsum" id="6FV0"/>
<dbReference type="SMR" id="O88447"/>
<dbReference type="CORUM" id="O88447"/>
<dbReference type="DIP" id="DIP-31520N"/>
<dbReference type="ELM" id="O88447"/>
<dbReference type="FunCoup" id="O88447">
    <property type="interactions" value="1526"/>
</dbReference>
<dbReference type="IntAct" id="O88447">
    <property type="interactions" value="18"/>
</dbReference>
<dbReference type="MINT" id="O88447"/>
<dbReference type="STRING" id="10090.ENSMUSP00000082004"/>
<dbReference type="GlyGen" id="O88447">
    <property type="glycosylation" value="2 sites, 1 N-linked glycan (1 site), 1 O-linked glycan (1 site)"/>
</dbReference>
<dbReference type="iPTMnet" id="O88447"/>
<dbReference type="PhosphoSitePlus" id="O88447"/>
<dbReference type="SwissPalm" id="O88447"/>
<dbReference type="jPOST" id="O88447"/>
<dbReference type="PaxDb" id="10090-ENSMUSP00000082004"/>
<dbReference type="PeptideAtlas" id="O88447"/>
<dbReference type="ProteomicsDB" id="264940"/>
<dbReference type="Pumba" id="O88447"/>
<dbReference type="AGR" id="MGI:107978"/>
<dbReference type="MGI" id="MGI:107978">
    <property type="gene designation" value="Klc1"/>
</dbReference>
<dbReference type="eggNOG" id="KOG1840">
    <property type="taxonomic scope" value="Eukaryota"/>
</dbReference>
<dbReference type="InParanoid" id="O88447"/>
<dbReference type="Reactome" id="R-MMU-2132295">
    <property type="pathway name" value="MHC class II antigen presentation"/>
</dbReference>
<dbReference type="Reactome" id="R-MMU-5625970">
    <property type="pathway name" value="RHO GTPases activate KTN1"/>
</dbReference>
<dbReference type="Reactome" id="R-MMU-6811434">
    <property type="pathway name" value="COPI-dependent Golgi-to-ER retrograde traffic"/>
</dbReference>
<dbReference type="Reactome" id="R-MMU-983189">
    <property type="pathway name" value="Kinesins"/>
</dbReference>
<dbReference type="ChiTaRS" id="Klc1">
    <property type="organism name" value="mouse"/>
</dbReference>
<dbReference type="PRO" id="PR:O88447"/>
<dbReference type="Proteomes" id="UP000000589">
    <property type="component" value="Unplaced"/>
</dbReference>
<dbReference type="RNAct" id="O88447">
    <property type="molecule type" value="protein"/>
</dbReference>
<dbReference type="GO" id="GO:0030424">
    <property type="term" value="C:axon"/>
    <property type="evidence" value="ECO:0000314"/>
    <property type="project" value="MGI"/>
</dbReference>
<dbReference type="GO" id="GO:0035253">
    <property type="term" value="C:ciliary rootlet"/>
    <property type="evidence" value="ECO:0000314"/>
    <property type="project" value="MGI"/>
</dbReference>
<dbReference type="GO" id="GO:0005737">
    <property type="term" value="C:cytoplasm"/>
    <property type="evidence" value="ECO:0000314"/>
    <property type="project" value="MGI"/>
</dbReference>
<dbReference type="GO" id="GO:0031410">
    <property type="term" value="C:cytoplasmic vesicle"/>
    <property type="evidence" value="ECO:0000314"/>
    <property type="project" value="MGI"/>
</dbReference>
<dbReference type="GO" id="GO:0005829">
    <property type="term" value="C:cytosol"/>
    <property type="evidence" value="ECO:0000314"/>
    <property type="project" value="HGNC-UCL"/>
</dbReference>
<dbReference type="GO" id="GO:0030426">
    <property type="term" value="C:growth cone"/>
    <property type="evidence" value="ECO:0000250"/>
    <property type="project" value="UniProtKB"/>
</dbReference>
<dbReference type="GO" id="GO:0005871">
    <property type="term" value="C:kinesin complex"/>
    <property type="evidence" value="ECO:0000314"/>
    <property type="project" value="HGNC-UCL"/>
</dbReference>
<dbReference type="GO" id="GO:0005874">
    <property type="term" value="C:microtubule"/>
    <property type="evidence" value="ECO:0007669"/>
    <property type="project" value="UniProtKB-KW"/>
</dbReference>
<dbReference type="GO" id="GO:0043005">
    <property type="term" value="C:neuron projection"/>
    <property type="evidence" value="ECO:0000314"/>
    <property type="project" value="MGI"/>
</dbReference>
<dbReference type="GO" id="GO:0008088">
    <property type="term" value="P:axo-dendritic transport"/>
    <property type="evidence" value="ECO:0000315"/>
    <property type="project" value="MGI"/>
</dbReference>
<dbReference type="GO" id="GO:0007155">
    <property type="term" value="P:cell adhesion"/>
    <property type="evidence" value="ECO:0007669"/>
    <property type="project" value="UniProtKB-KW"/>
</dbReference>
<dbReference type="GO" id="GO:0007018">
    <property type="term" value="P:microtubule-based movement"/>
    <property type="evidence" value="ECO:0000304"/>
    <property type="project" value="HGNC-UCL"/>
</dbReference>
<dbReference type="GO" id="GO:0035617">
    <property type="term" value="P:stress granule disassembly"/>
    <property type="evidence" value="ECO:0000315"/>
    <property type="project" value="BHF-UCL"/>
</dbReference>
<dbReference type="FunFam" id="1.25.40.10:FF:000003">
    <property type="entry name" value="kinesin light chain isoform X1"/>
    <property type="match status" value="1"/>
</dbReference>
<dbReference type="Gene3D" id="1.25.40.10">
    <property type="entry name" value="Tetratricopeptide repeat domain"/>
    <property type="match status" value="1"/>
</dbReference>
<dbReference type="InterPro" id="IPR002151">
    <property type="entry name" value="Kinesin_light"/>
</dbReference>
<dbReference type="InterPro" id="IPR011990">
    <property type="entry name" value="TPR-like_helical_dom_sf"/>
</dbReference>
<dbReference type="InterPro" id="IPR019734">
    <property type="entry name" value="TPR_rpt"/>
</dbReference>
<dbReference type="PANTHER" id="PTHR45783">
    <property type="entry name" value="KINESIN LIGHT CHAIN"/>
    <property type="match status" value="1"/>
</dbReference>
<dbReference type="PANTHER" id="PTHR45783:SF7">
    <property type="entry name" value="KINESIN LIGHT CHAIN 1"/>
    <property type="match status" value="1"/>
</dbReference>
<dbReference type="Pfam" id="PF13374">
    <property type="entry name" value="TPR_10"/>
    <property type="match status" value="2"/>
</dbReference>
<dbReference type="Pfam" id="PF13424">
    <property type="entry name" value="TPR_12"/>
    <property type="match status" value="2"/>
</dbReference>
<dbReference type="PRINTS" id="PR00381">
    <property type="entry name" value="KINESINLIGHT"/>
</dbReference>
<dbReference type="SMART" id="SM00028">
    <property type="entry name" value="TPR"/>
    <property type="match status" value="6"/>
</dbReference>
<dbReference type="SUPFAM" id="SSF48452">
    <property type="entry name" value="TPR-like"/>
    <property type="match status" value="2"/>
</dbReference>
<dbReference type="PROSITE" id="PS01160">
    <property type="entry name" value="KINESIN_LIGHT"/>
    <property type="match status" value="3"/>
</dbReference>
<dbReference type="PROSITE" id="PS50005">
    <property type="entry name" value="TPR"/>
    <property type="match status" value="6"/>
</dbReference>
<dbReference type="PROSITE" id="PS50293">
    <property type="entry name" value="TPR_REGION"/>
    <property type="match status" value="2"/>
</dbReference>
<organism>
    <name type="scientific">Mus musculus</name>
    <name type="common">Mouse</name>
    <dbReference type="NCBI Taxonomy" id="10090"/>
    <lineage>
        <taxon>Eukaryota</taxon>
        <taxon>Metazoa</taxon>
        <taxon>Chordata</taxon>
        <taxon>Craniata</taxon>
        <taxon>Vertebrata</taxon>
        <taxon>Euteleostomi</taxon>
        <taxon>Mammalia</taxon>
        <taxon>Eutheria</taxon>
        <taxon>Euarchontoglires</taxon>
        <taxon>Glires</taxon>
        <taxon>Rodentia</taxon>
        <taxon>Myomorpha</taxon>
        <taxon>Muroidea</taxon>
        <taxon>Muridae</taxon>
        <taxon>Murinae</taxon>
        <taxon>Mus</taxon>
        <taxon>Mus</taxon>
    </lineage>
</organism>
<keyword id="KW-0002">3D-structure</keyword>
<keyword id="KW-0106">Calcium</keyword>
<keyword id="KW-0130">Cell adhesion</keyword>
<keyword id="KW-0966">Cell projection</keyword>
<keyword id="KW-0175">Coiled coil</keyword>
<keyword id="KW-0963">Cytoplasm</keyword>
<keyword id="KW-0968">Cytoplasmic vesicle</keyword>
<keyword id="KW-0206">Cytoskeleton</keyword>
<keyword id="KW-0493">Microtubule</keyword>
<keyword id="KW-0505">Motor protein</keyword>
<keyword id="KW-0597">Phosphoprotein</keyword>
<keyword id="KW-1185">Reference proteome</keyword>
<keyword id="KW-0677">Repeat</keyword>
<keyword id="KW-0802">TPR repeat</keyword>
<accession>O88447</accession>
<sequence>MYDNMSTMVYIKEEKLENVTQDEIISKTKQVIQGLEALKNEHNSILQSLLETLKCLKKDDESNLVEEKSSMIRKSLEMLELGLSEAQVMMALSNHLNAVESEKQNVRAQVRRLCQENQWLRDELANTQQKLQKSEQSVAQLEEEKKHLEFMNQLKKYDDDISPSEDKDSDSSKEPLDDLFPNDEDEPGQGIQHSDSSAAAARQGYEIPARLRTLHNLVIQYASQGRYEVAVPSCKQALEDLEKTSGHDHPDVATMLNILALVYRDQNKYKDAANLLNDALAIREKTLGRDHPAVAATLNNLAVLYGKRGKYKEAEPLCKRALEIREKVLGKDHPDVAKQLNNLALLCQNQGKYEEVEYYYQRALGIYQTKLGPDRTPNVAKTKNNLASCYLKQGKFKQAETLYKEILTRAHEAEFGSVDDENKPIWMHAEEREECKGKQKDGSAFGEYGGWYKACKVDSPTVTTTLKNLGALYRRQGKFEAAETLEEAAMRSRKQGLDNVHKQRVAEVLNDPESMEKRRSRESLNMDVVKYESGPDGGEEA</sequence>
<name>KLC1_MOUSE</name>
<reference key="1">
    <citation type="journal article" date="1998" name="J. Biol. Chem.">
        <title>Two kinesin light chain genes in mice. Identification and characterization of the encoded proteins.</title>
        <authorList>
            <person name="Rahman A."/>
            <person name="Friedman D.S."/>
            <person name="Goldstein L.S."/>
        </authorList>
    </citation>
    <scope>NUCLEOTIDE SEQUENCE [MRNA]</scope>
    <source>
        <strain>BALB/cJ</strain>
        <tissue>Brain</tissue>
    </source>
</reference>
<reference key="2">
    <citation type="journal article" date="2005" name="Mol. Cell. Biol.">
        <title>Role of the JIP4 scaffold protein in the regulation of mitogen-activated protein kinase signaling pathways.</title>
        <authorList>
            <person name="Kelkar N."/>
            <person name="Standen C.L."/>
            <person name="Davis R.J."/>
        </authorList>
    </citation>
    <scope>INTERACTION WITH SPAG9</scope>
    <source>
        <strain>C57BL/6J</strain>
        <tissue>Testis</tissue>
    </source>
</reference>
<reference key="3">
    <citation type="journal article" date="2007" name="J. Immunol.">
        <title>Quantitative time-resolved phosphoproteomic analysis of mast cell signaling.</title>
        <authorList>
            <person name="Cao L."/>
            <person name="Yu K."/>
            <person name="Banh C."/>
            <person name="Nguyen V."/>
            <person name="Ritz A."/>
            <person name="Raphael B.J."/>
            <person name="Kawakami Y."/>
            <person name="Kawakami T."/>
            <person name="Salomon A.R."/>
        </authorList>
    </citation>
    <scope>PHOSPHORYLATION [LARGE SCALE ANALYSIS] AT TYR-448</scope>
    <scope>IDENTIFICATION BY MASS SPECTROMETRY [LARGE SCALE ANALYSIS]</scope>
    <source>
        <tissue>Mast cell</tissue>
    </source>
</reference>
<reference key="4">
    <citation type="journal article" date="2009" name="J. Cell Sci.">
        <title>Cayman ataxia protein caytaxin is transported by kinesin along neurites through binding to kinesin light chains.</title>
        <authorList>
            <person name="Aoyama T."/>
            <person name="Hata S."/>
            <person name="Nakao T."/>
            <person name="Tanigawa Y."/>
            <person name="Oka C."/>
            <person name="Kawaichi M."/>
        </authorList>
    </citation>
    <scope>INTERACTION WITH ATCAY</scope>
</reference>
<reference key="5">
    <citation type="journal article" date="2010" name="Cell">
        <title>A tissue-specific atlas of mouse protein phosphorylation and expression.</title>
        <authorList>
            <person name="Huttlin E.L."/>
            <person name="Jedrychowski M.P."/>
            <person name="Elias J.E."/>
            <person name="Goswami T."/>
            <person name="Rad R."/>
            <person name="Beausoleil S.A."/>
            <person name="Villen J."/>
            <person name="Haas W."/>
            <person name="Sowa M.E."/>
            <person name="Gygi S.P."/>
        </authorList>
    </citation>
    <scope>PHOSPHORYLATION [LARGE SCALE ANALYSIS] AT SER-459; SER-520 AND SER-523</scope>
    <scope>IDENTIFICATION BY MASS SPECTROMETRY [LARGE SCALE ANALYSIS]</scope>
    <source>
        <tissue>Brain</tissue>
        <tissue>Heart</tissue>
        <tissue>Kidney</tissue>
        <tissue>Lung</tissue>
        <tissue>Spleen</tissue>
    </source>
</reference>
<gene>
    <name type="primary">Klc1</name>
    <name type="synonym">Kns2</name>
</gene>
<proteinExistence type="evidence at protein level"/>
<feature type="chain" id="PRO_0000215093" description="Kinesin light chain 1">
    <location>
        <begin position="1"/>
        <end position="541"/>
    </location>
</feature>
<feature type="repeat" description="TPR 1">
    <location>
        <begin position="211"/>
        <end position="244"/>
    </location>
</feature>
<feature type="repeat" description="TPR 2">
    <location>
        <begin position="253"/>
        <end position="286"/>
    </location>
</feature>
<feature type="repeat" description="TPR 3">
    <location>
        <begin position="295"/>
        <end position="328"/>
    </location>
</feature>
<feature type="repeat" description="TPR 4">
    <location>
        <begin position="337"/>
        <end position="370"/>
    </location>
</feature>
<feature type="repeat" description="TPR 5">
    <location>
        <begin position="380"/>
        <end position="413"/>
    </location>
</feature>
<feature type="repeat" description="TPR 6">
    <location>
        <begin position="463"/>
        <end position="496"/>
    </location>
</feature>
<feature type="region of interest" description="Disordered" evidence="3">
    <location>
        <begin position="156"/>
        <end position="201"/>
    </location>
</feature>
<feature type="region of interest" description="Disordered" evidence="3">
    <location>
        <begin position="493"/>
        <end position="541"/>
    </location>
</feature>
<feature type="coiled-coil region">
    <location>
        <begin position="27"/>
        <end position="156"/>
    </location>
</feature>
<feature type="compositionally biased region" description="Basic and acidic residues" evidence="3">
    <location>
        <begin position="156"/>
        <end position="176"/>
    </location>
</feature>
<feature type="compositionally biased region" description="Basic and acidic residues" evidence="3">
    <location>
        <begin position="495"/>
        <end position="505"/>
    </location>
</feature>
<feature type="compositionally biased region" description="Basic and acidic residues" evidence="3">
    <location>
        <begin position="514"/>
        <end position="524"/>
    </location>
</feature>
<feature type="modified residue" description="Phosphoserine" evidence="1">
    <location>
        <position position="162"/>
    </location>
</feature>
<feature type="modified residue" description="Phosphotyrosine" evidence="7">
    <location>
        <position position="448"/>
    </location>
</feature>
<feature type="modified residue" description="Phosphoserine" evidence="8">
    <location>
        <position position="459"/>
    </location>
</feature>
<feature type="modified residue" description="Phosphoserine; by AMPK" evidence="6 8">
    <location>
        <position position="520"/>
    </location>
</feature>
<feature type="modified residue" description="Phosphoserine; by AMPK" evidence="6 8">
    <location>
        <position position="523"/>
    </location>
</feature>
<feature type="helix" evidence="9">
    <location>
        <begin position="213"/>
        <end position="223"/>
    </location>
</feature>
<feature type="helix" evidence="9">
    <location>
        <begin position="227"/>
        <end position="244"/>
    </location>
</feature>
<feature type="strand" evidence="9">
    <location>
        <begin position="247"/>
        <end position="249"/>
    </location>
</feature>
<feature type="helix" evidence="9">
    <location>
        <begin position="250"/>
        <end position="265"/>
    </location>
</feature>
<feature type="helix" evidence="9">
    <location>
        <begin position="269"/>
        <end position="286"/>
    </location>
</feature>
<feature type="helix" evidence="9">
    <location>
        <begin position="292"/>
        <end position="307"/>
    </location>
</feature>
<feature type="helix" evidence="9">
    <location>
        <begin position="311"/>
        <end position="329"/>
    </location>
</feature>
<feature type="helix" evidence="9">
    <location>
        <begin position="334"/>
        <end position="348"/>
    </location>
</feature>
<feature type="turn" evidence="9">
    <location>
        <begin position="349"/>
        <end position="351"/>
    </location>
</feature>
<feature type="helix" evidence="9">
    <location>
        <begin position="356"/>
        <end position="370"/>
    </location>
</feature>
<feature type="helix" evidence="9">
    <location>
        <begin position="377"/>
        <end position="392"/>
    </location>
</feature>
<feature type="helix" evidence="9">
    <location>
        <begin position="396"/>
        <end position="414"/>
    </location>
</feature>
<feature type="strand" evidence="9">
    <location>
        <begin position="420"/>
        <end position="422"/>
    </location>
</feature>
<feature type="helix" evidence="9">
    <location>
        <begin position="425"/>
        <end position="434"/>
    </location>
</feature>
<feature type="helix" evidence="9">
    <location>
        <begin position="460"/>
        <end position="475"/>
    </location>
</feature>
<feature type="helix" evidence="9">
    <location>
        <begin position="479"/>
        <end position="493"/>
    </location>
</feature>
<comment type="function">
    <text evidence="1">Kinesin is a microtubule-associated force-producing protein that may play a role in organelle transport. The light chain may function in coupling of cargo to the heavy chain or in the modulation of its ATPase activity.</text>
</comment>
<comment type="subunit">
    <text evidence="1 2 4 5">Oligomeric complex composed of two heavy chains and two light chains. Interacts with SPAG9 (PubMed:15767678). Interacts with ATCAY; may link mitochondria to KLC1 and regulate mitochondria localization into neuron projections (PubMed:19861499). Interacts (via TPR repeats) with TOR1A; the interaction associates TOR1A with the kinesin oligomeric complex (By similarity). Interacts with BORCS5 (By similarity). Interacts with MAPK8IP3/JIP3 and NTRK2/TRKB; interaction with NTRK2/TRKB is mediated by MAPK8IP3/JIP3 (By similarity). Interacts with CLSTN1; phosphorylation at Ser-459 inhibits interaction with CLSTN1 (By similarity).</text>
</comment>
<comment type="interaction">
    <interactant intactId="EBI-301550">
        <id>O88447</id>
    </interactant>
    <interactant intactId="EBI-433443">
        <id>P63017</id>
        <label>Hspa8</label>
    </interactant>
    <organismsDiffer>false</organismsDiffer>
    <experiments>3</experiments>
</comment>
<comment type="interaction">
    <interactant intactId="EBI-301550">
        <id>O88447</id>
    </interactant>
    <interactant intactId="EBI-301496">
        <id>Q9ESN9</id>
        <label>Mapk8ip3</label>
    </interactant>
    <organismsDiffer>false</organismsDiffer>
    <experiments>10</experiments>
</comment>
<comment type="interaction">
    <interactant intactId="EBI-301550">
        <id>O88447</id>
    </interactant>
    <interactant intactId="EBI-7133540">
        <id>P68619</id>
        <label>OPG164</label>
    </interactant>
    <organismsDiffer>true</organismsDiffer>
    <experiments>2</experiments>
</comment>
<comment type="subcellular location">
    <subcellularLocation>
        <location evidence="1">Cell projection</location>
        <location evidence="1">Growth cone</location>
    </subcellularLocation>
    <subcellularLocation>
        <location evidence="1">Cytoplasmic vesicle</location>
    </subcellularLocation>
    <subcellularLocation>
        <location evidence="1">Cytoplasm</location>
        <location evidence="1">Cytoskeleton</location>
    </subcellularLocation>
</comment>
<comment type="PTM">
    <text evidence="2">Phosphorylation at Ser-459 by ERK inhibits interaction with CLSTN1 and localization to cytoplasmic vesicles.</text>
</comment>
<comment type="similarity">
    <text evidence="6">Belongs to the kinesin light chain family.</text>
</comment>
<comment type="caution">
    <text evidence="6">It is uncertain whether Met-1 or Met-5 is the initiator.</text>
</comment>